<comment type="function">
    <text evidence="1">Involved in the gluconeogenesis. Catalyzes stereospecifically the conversion of dihydroxyacetone phosphate (DHAP) to D-glyceraldehyde-3-phosphate (G3P).</text>
</comment>
<comment type="catalytic activity">
    <reaction evidence="1">
        <text>D-glyceraldehyde 3-phosphate = dihydroxyacetone phosphate</text>
        <dbReference type="Rhea" id="RHEA:18585"/>
        <dbReference type="ChEBI" id="CHEBI:57642"/>
        <dbReference type="ChEBI" id="CHEBI:59776"/>
        <dbReference type="EC" id="5.3.1.1"/>
    </reaction>
</comment>
<comment type="pathway">
    <text evidence="1">Carbohydrate biosynthesis; gluconeogenesis.</text>
</comment>
<comment type="pathway">
    <text evidence="1">Carbohydrate degradation; glycolysis; D-glyceraldehyde 3-phosphate from glycerone phosphate: step 1/1.</text>
</comment>
<comment type="subunit">
    <text evidence="1">Homodimer.</text>
</comment>
<comment type="subcellular location">
    <subcellularLocation>
        <location evidence="1">Cytoplasm</location>
    </subcellularLocation>
</comment>
<comment type="similarity">
    <text evidence="1">Belongs to the triosephosphate isomerase family.</text>
</comment>
<sequence length="253" mass="27656">MQKLIMGNWKMNGNSTSIKELCSGISQVQYDTSRVAIAVFPSSVYVKEVISQLPEKVGVGLQNITFYDDGAYTGEISARMLEDIGCDYLLIGHSERRSLFAESDEDVFKKLNKIIDTTITPVVCIGESLDDRKSGKLKQVLATQLSLILENLSVEQLAKVVIAYEPVWAIGTGVVASLEQIQETHQFIRSLLAKVDERLAKNIKIVYGGSLKAENAKDILSLPDVDGGLIGGASLKAAEFNEIINQANKICTE</sequence>
<keyword id="KW-0963">Cytoplasm</keyword>
<keyword id="KW-0312">Gluconeogenesis</keyword>
<keyword id="KW-0324">Glycolysis</keyword>
<keyword id="KW-0413">Isomerase</keyword>
<keyword id="KW-1185">Reference proteome</keyword>
<proteinExistence type="inferred from homology"/>
<evidence type="ECO:0000255" key="1">
    <source>
        <dbReference type="HAMAP-Rule" id="MF_00147"/>
    </source>
</evidence>
<dbReference type="EC" id="5.3.1.1" evidence="1"/>
<dbReference type="EMBL" id="AM233362">
    <property type="protein sequence ID" value="CAJ80219.1"/>
    <property type="molecule type" value="Genomic_DNA"/>
</dbReference>
<dbReference type="EMBL" id="U73962">
    <property type="protein sequence ID" value="AAB48822.1"/>
    <property type="molecule type" value="Genomic_DNA"/>
</dbReference>
<dbReference type="RefSeq" id="WP_003017307.1">
    <property type="nucleotide sequence ID" value="NZ_CP009694.1"/>
</dbReference>
<dbReference type="SMR" id="P96763"/>
<dbReference type="KEGG" id="ftl:FTL_1780"/>
<dbReference type="UniPathway" id="UPA00109">
    <property type="reaction ID" value="UER00189"/>
</dbReference>
<dbReference type="UniPathway" id="UPA00138"/>
<dbReference type="Proteomes" id="UP000001944">
    <property type="component" value="Chromosome"/>
</dbReference>
<dbReference type="GO" id="GO:0005829">
    <property type="term" value="C:cytosol"/>
    <property type="evidence" value="ECO:0007669"/>
    <property type="project" value="TreeGrafter"/>
</dbReference>
<dbReference type="GO" id="GO:0004807">
    <property type="term" value="F:triose-phosphate isomerase activity"/>
    <property type="evidence" value="ECO:0007669"/>
    <property type="project" value="UniProtKB-UniRule"/>
</dbReference>
<dbReference type="GO" id="GO:0006094">
    <property type="term" value="P:gluconeogenesis"/>
    <property type="evidence" value="ECO:0007669"/>
    <property type="project" value="UniProtKB-UniRule"/>
</dbReference>
<dbReference type="GO" id="GO:0046166">
    <property type="term" value="P:glyceraldehyde-3-phosphate biosynthetic process"/>
    <property type="evidence" value="ECO:0007669"/>
    <property type="project" value="TreeGrafter"/>
</dbReference>
<dbReference type="GO" id="GO:0019563">
    <property type="term" value="P:glycerol catabolic process"/>
    <property type="evidence" value="ECO:0007669"/>
    <property type="project" value="TreeGrafter"/>
</dbReference>
<dbReference type="GO" id="GO:0006096">
    <property type="term" value="P:glycolytic process"/>
    <property type="evidence" value="ECO:0007669"/>
    <property type="project" value="UniProtKB-UniRule"/>
</dbReference>
<dbReference type="CDD" id="cd00311">
    <property type="entry name" value="TIM"/>
    <property type="match status" value="1"/>
</dbReference>
<dbReference type="FunFam" id="3.20.20.70:FF:000016">
    <property type="entry name" value="Triosephosphate isomerase"/>
    <property type="match status" value="1"/>
</dbReference>
<dbReference type="Gene3D" id="3.20.20.70">
    <property type="entry name" value="Aldolase class I"/>
    <property type="match status" value="1"/>
</dbReference>
<dbReference type="HAMAP" id="MF_00147_B">
    <property type="entry name" value="TIM_B"/>
    <property type="match status" value="1"/>
</dbReference>
<dbReference type="InterPro" id="IPR013785">
    <property type="entry name" value="Aldolase_TIM"/>
</dbReference>
<dbReference type="InterPro" id="IPR035990">
    <property type="entry name" value="TIM_sf"/>
</dbReference>
<dbReference type="InterPro" id="IPR022896">
    <property type="entry name" value="TrioseP_Isoase_bac/euk"/>
</dbReference>
<dbReference type="InterPro" id="IPR000652">
    <property type="entry name" value="Triosephosphate_isomerase"/>
</dbReference>
<dbReference type="InterPro" id="IPR020861">
    <property type="entry name" value="Triosephosphate_isomerase_AS"/>
</dbReference>
<dbReference type="NCBIfam" id="TIGR00419">
    <property type="entry name" value="tim"/>
    <property type="match status" value="1"/>
</dbReference>
<dbReference type="PANTHER" id="PTHR21139">
    <property type="entry name" value="TRIOSEPHOSPHATE ISOMERASE"/>
    <property type="match status" value="1"/>
</dbReference>
<dbReference type="PANTHER" id="PTHR21139:SF42">
    <property type="entry name" value="TRIOSEPHOSPHATE ISOMERASE"/>
    <property type="match status" value="1"/>
</dbReference>
<dbReference type="Pfam" id="PF00121">
    <property type="entry name" value="TIM"/>
    <property type="match status" value="1"/>
</dbReference>
<dbReference type="SUPFAM" id="SSF51351">
    <property type="entry name" value="Triosephosphate isomerase (TIM)"/>
    <property type="match status" value="1"/>
</dbReference>
<dbReference type="PROSITE" id="PS00171">
    <property type="entry name" value="TIM_1"/>
    <property type="match status" value="1"/>
</dbReference>
<dbReference type="PROSITE" id="PS51440">
    <property type="entry name" value="TIM_2"/>
    <property type="match status" value="1"/>
</dbReference>
<gene>
    <name evidence="1" type="primary">tpiA</name>
    <name type="synonym">tpi</name>
    <name type="ordered locus">FTL_1780</name>
</gene>
<feature type="chain" id="PRO_0000090222" description="Triosephosphate isomerase">
    <location>
        <begin position="1"/>
        <end position="253"/>
    </location>
</feature>
<feature type="active site" description="Electrophile" evidence="1">
    <location>
        <position position="93"/>
    </location>
</feature>
<feature type="active site" description="Proton acceptor" evidence="1">
    <location>
        <position position="165"/>
    </location>
</feature>
<feature type="binding site" evidence="1">
    <location>
        <begin position="8"/>
        <end position="10"/>
    </location>
    <ligand>
        <name>substrate</name>
    </ligand>
</feature>
<feature type="binding site" evidence="1">
    <location>
        <position position="171"/>
    </location>
    <ligand>
        <name>substrate</name>
    </ligand>
</feature>
<feature type="binding site" evidence="1">
    <location>
        <position position="210"/>
    </location>
    <ligand>
        <name>substrate</name>
    </ligand>
</feature>
<feature type="binding site" evidence="1">
    <location>
        <begin position="231"/>
        <end position="232"/>
    </location>
    <ligand>
        <name>substrate</name>
    </ligand>
</feature>
<protein>
    <recommendedName>
        <fullName evidence="1">Triosephosphate isomerase</fullName>
        <shortName evidence="1">TIM</shortName>
        <shortName evidence="1">TPI</shortName>
        <ecNumber evidence="1">5.3.1.1</ecNumber>
    </recommendedName>
    <alternativeName>
        <fullName evidence="1">Triose-phosphate isomerase</fullName>
    </alternativeName>
</protein>
<accession>P96763</accession>
<accession>Q2A1J7</accession>
<name>TPIS_FRATH</name>
<reference key="1">
    <citation type="submission" date="2006-03" db="EMBL/GenBank/DDBJ databases">
        <title>Complete genome sequence of Francisella tularensis LVS (Live Vaccine Strain).</title>
        <authorList>
            <person name="Chain P."/>
            <person name="Larimer F."/>
            <person name="Land M."/>
            <person name="Stilwagen S."/>
            <person name="Larsson P."/>
            <person name="Bearden S."/>
            <person name="Chu M."/>
            <person name="Oyston P."/>
            <person name="Forsman M."/>
            <person name="Andersson S."/>
            <person name="Lindler L."/>
            <person name="Titball R."/>
            <person name="Garcia E."/>
        </authorList>
    </citation>
    <scope>NUCLEOTIDE SEQUENCE [LARGE SCALE GENOMIC DNA]</scope>
    <source>
        <strain>LVS</strain>
    </source>
</reference>
<reference key="2">
    <citation type="journal article" date="1997" name="Proc. Natl. Acad. Sci. U.S.A.">
        <title>Evidence that eukaryotic triosephosphate isomerase is of alpha-proteobacterial origin.</title>
        <authorList>
            <person name="Keeling P.J."/>
            <person name="Doolittle W.F."/>
        </authorList>
    </citation>
    <scope>NUCLEOTIDE SEQUENCE [GENOMIC DNA] OF 11-229</scope>
</reference>
<organism>
    <name type="scientific">Francisella tularensis subsp. holarctica (strain LVS)</name>
    <dbReference type="NCBI Taxonomy" id="376619"/>
    <lineage>
        <taxon>Bacteria</taxon>
        <taxon>Pseudomonadati</taxon>
        <taxon>Pseudomonadota</taxon>
        <taxon>Gammaproteobacteria</taxon>
        <taxon>Thiotrichales</taxon>
        <taxon>Francisellaceae</taxon>
        <taxon>Francisella</taxon>
    </lineage>
</organism>